<keyword id="KW-1003">Cell membrane</keyword>
<keyword id="KW-0325">Glycoprotein</keyword>
<keyword id="KW-0407">Ion channel</keyword>
<keyword id="KW-0406">Ion transport</keyword>
<keyword id="KW-0472">Membrane</keyword>
<keyword id="KW-0479">Metal-binding</keyword>
<keyword id="KW-0597">Phosphoprotein</keyword>
<keyword id="KW-0630">Potassium</keyword>
<keyword id="KW-0631">Potassium channel</keyword>
<keyword id="KW-0633">Potassium transport</keyword>
<keyword id="KW-1185">Reference proteome</keyword>
<keyword id="KW-0812">Transmembrane</keyword>
<keyword id="KW-1133">Transmembrane helix</keyword>
<keyword id="KW-0813">Transport</keyword>
<keyword id="KW-0851">Voltage-gated channel</keyword>
<keyword id="KW-0862">Zinc</keyword>
<gene>
    <name evidence="6" type="primary">KCND1</name>
</gene>
<accession>Q52PG9</accession>
<protein>
    <recommendedName>
        <fullName evidence="6">A-type voltage-gated potassium channel KCND1</fullName>
    </recommendedName>
    <alternativeName>
        <fullName>Potassium voltage-gated channel subfamily D member 1</fullName>
    </alternativeName>
    <alternativeName>
        <fullName>Voltage-gated potassium channel subunit Kv4.1</fullName>
    </alternativeName>
</protein>
<proteinExistence type="evidence at transcript level"/>
<name>KCND1_BOVIN</name>
<dbReference type="EMBL" id="AY989810">
    <property type="protein sequence ID" value="AAX89129.1"/>
    <property type="molecule type" value="mRNA"/>
</dbReference>
<dbReference type="RefSeq" id="NP_001019724.1">
    <property type="nucleotide sequence ID" value="NM_001024553.1"/>
</dbReference>
<dbReference type="RefSeq" id="XP_010820207.1">
    <property type="nucleotide sequence ID" value="XM_010821905.4"/>
</dbReference>
<dbReference type="RefSeq" id="XP_024843774.1">
    <property type="nucleotide sequence ID" value="XM_024988006.2"/>
</dbReference>
<dbReference type="SMR" id="Q52PG9"/>
<dbReference type="FunCoup" id="Q52PG9">
    <property type="interactions" value="727"/>
</dbReference>
<dbReference type="STRING" id="9913.ENSBTAP00000011882"/>
<dbReference type="GlyCosmos" id="Q52PG9">
    <property type="glycosylation" value="2 sites, No reported glycans"/>
</dbReference>
<dbReference type="GlyGen" id="Q52PG9">
    <property type="glycosylation" value="2 sites"/>
</dbReference>
<dbReference type="PaxDb" id="9913-ENSBTAP00000011882"/>
<dbReference type="Ensembl" id="ENSBTAT00000011882.6">
    <property type="protein sequence ID" value="ENSBTAP00000011882.4"/>
    <property type="gene ID" value="ENSBTAG00000009024.6"/>
</dbReference>
<dbReference type="GeneID" id="518384"/>
<dbReference type="KEGG" id="bta:518384"/>
<dbReference type="CTD" id="3750"/>
<dbReference type="VEuPathDB" id="HostDB:ENSBTAG00000009024"/>
<dbReference type="VGNC" id="VGNC:30434">
    <property type="gene designation" value="KCND1"/>
</dbReference>
<dbReference type="eggNOG" id="KOG4390">
    <property type="taxonomic scope" value="Eukaryota"/>
</dbReference>
<dbReference type="GeneTree" id="ENSGT00940000162057"/>
<dbReference type="HOGENOM" id="CLU_011722_9_1_1"/>
<dbReference type="InParanoid" id="Q52PG9"/>
<dbReference type="OMA" id="RFPMAFF"/>
<dbReference type="OrthoDB" id="433309at2759"/>
<dbReference type="TreeFam" id="TF313103"/>
<dbReference type="Reactome" id="R-BTA-1296072">
    <property type="pathway name" value="Voltage gated Potassium channels"/>
</dbReference>
<dbReference type="Reactome" id="R-BTA-5576894">
    <property type="pathway name" value="Phase 1 - inactivation of fast Na+ channels"/>
</dbReference>
<dbReference type="Proteomes" id="UP000009136">
    <property type="component" value="Chromosome X"/>
</dbReference>
<dbReference type="Bgee" id="ENSBTAG00000009024">
    <property type="expression patterns" value="Expressed in thymus and 97 other cell types or tissues"/>
</dbReference>
<dbReference type="GO" id="GO:0043197">
    <property type="term" value="C:dendritic spine"/>
    <property type="evidence" value="ECO:0000318"/>
    <property type="project" value="GO_Central"/>
</dbReference>
<dbReference type="GO" id="GO:0043025">
    <property type="term" value="C:neuronal cell body"/>
    <property type="evidence" value="ECO:0000318"/>
    <property type="project" value="GO_Central"/>
</dbReference>
<dbReference type="GO" id="GO:0045211">
    <property type="term" value="C:postsynaptic membrane"/>
    <property type="evidence" value="ECO:0000318"/>
    <property type="project" value="GO_Central"/>
</dbReference>
<dbReference type="GO" id="GO:0008076">
    <property type="term" value="C:voltage-gated potassium channel complex"/>
    <property type="evidence" value="ECO:0000318"/>
    <property type="project" value="GO_Central"/>
</dbReference>
<dbReference type="GO" id="GO:0005250">
    <property type="term" value="F:A-type (transient outward) potassium channel activity"/>
    <property type="evidence" value="ECO:0000318"/>
    <property type="project" value="GO_Central"/>
</dbReference>
<dbReference type="GO" id="GO:0046872">
    <property type="term" value="F:metal ion binding"/>
    <property type="evidence" value="ECO:0007669"/>
    <property type="project" value="UniProtKB-KW"/>
</dbReference>
<dbReference type="GO" id="GO:0001508">
    <property type="term" value="P:action potential"/>
    <property type="evidence" value="ECO:0000318"/>
    <property type="project" value="GO_Central"/>
</dbReference>
<dbReference type="GO" id="GO:0071805">
    <property type="term" value="P:potassium ion transmembrane transport"/>
    <property type="evidence" value="ECO:0000318"/>
    <property type="project" value="GO_Central"/>
</dbReference>
<dbReference type="GO" id="GO:0051260">
    <property type="term" value="P:protein homooligomerization"/>
    <property type="evidence" value="ECO:0007669"/>
    <property type="project" value="InterPro"/>
</dbReference>
<dbReference type="FunFam" id="1.20.120.350:FF:000016">
    <property type="entry name" value="Potassium voltage-gated channel subfamily D member 3"/>
    <property type="match status" value="1"/>
</dbReference>
<dbReference type="FunFam" id="3.30.710.10:FF:000004">
    <property type="entry name" value="Potassium voltage-gated channel subfamily D member 3"/>
    <property type="match status" value="1"/>
</dbReference>
<dbReference type="FunFam" id="1.10.287.70:FF:000028">
    <property type="entry name" value="potassium voltage-gated channel subfamily D member 3"/>
    <property type="match status" value="1"/>
</dbReference>
<dbReference type="Gene3D" id="1.10.287.70">
    <property type="match status" value="1"/>
</dbReference>
<dbReference type="Gene3D" id="3.30.710.10">
    <property type="entry name" value="Potassium Channel Kv1.1, Chain A"/>
    <property type="match status" value="1"/>
</dbReference>
<dbReference type="Gene3D" id="1.20.120.350">
    <property type="entry name" value="Voltage-gated potassium channels. Chain C"/>
    <property type="match status" value="1"/>
</dbReference>
<dbReference type="InterPro" id="IPR000210">
    <property type="entry name" value="BTB/POZ_dom"/>
</dbReference>
<dbReference type="InterPro" id="IPR005821">
    <property type="entry name" value="Ion_trans_dom"/>
</dbReference>
<dbReference type="InterPro" id="IPR003968">
    <property type="entry name" value="K_chnl_volt-dep_Kv"/>
</dbReference>
<dbReference type="InterPro" id="IPR003975">
    <property type="entry name" value="K_chnl_volt-dep_Kv4"/>
</dbReference>
<dbReference type="InterPro" id="IPR004054">
    <property type="entry name" value="K_chnl_volt-dep_Kv4.1"/>
</dbReference>
<dbReference type="InterPro" id="IPR024587">
    <property type="entry name" value="K_chnl_volt-dep_Kv4_C"/>
</dbReference>
<dbReference type="InterPro" id="IPR021645">
    <property type="entry name" value="Shal-type_N"/>
</dbReference>
<dbReference type="InterPro" id="IPR011333">
    <property type="entry name" value="SKP1/BTB/POZ_sf"/>
</dbReference>
<dbReference type="InterPro" id="IPR003131">
    <property type="entry name" value="T1-type_BTB"/>
</dbReference>
<dbReference type="InterPro" id="IPR028325">
    <property type="entry name" value="VG_K_chnl"/>
</dbReference>
<dbReference type="InterPro" id="IPR027359">
    <property type="entry name" value="Volt_channel_dom_sf"/>
</dbReference>
<dbReference type="PANTHER" id="PTHR11537:SF174">
    <property type="entry name" value="POTASSIUM VOLTAGE-GATED CHANNEL SUBFAMILY D MEMBER 1"/>
    <property type="match status" value="1"/>
</dbReference>
<dbReference type="PANTHER" id="PTHR11537">
    <property type="entry name" value="VOLTAGE-GATED POTASSIUM CHANNEL"/>
    <property type="match status" value="1"/>
</dbReference>
<dbReference type="Pfam" id="PF02214">
    <property type="entry name" value="BTB_2"/>
    <property type="match status" value="1"/>
</dbReference>
<dbReference type="Pfam" id="PF11879">
    <property type="entry name" value="DUF3399"/>
    <property type="match status" value="1"/>
</dbReference>
<dbReference type="Pfam" id="PF00520">
    <property type="entry name" value="Ion_trans"/>
    <property type="match status" value="1"/>
</dbReference>
<dbReference type="Pfam" id="PF11601">
    <property type="entry name" value="Shal-type"/>
    <property type="match status" value="1"/>
</dbReference>
<dbReference type="PRINTS" id="PR00169">
    <property type="entry name" value="KCHANNEL"/>
</dbReference>
<dbReference type="PRINTS" id="PR01516">
    <property type="entry name" value="KV41CHANNEL"/>
</dbReference>
<dbReference type="PRINTS" id="PR01491">
    <property type="entry name" value="KVCHANNEL"/>
</dbReference>
<dbReference type="PRINTS" id="PR01497">
    <property type="entry name" value="SHALCHANNEL"/>
</dbReference>
<dbReference type="SMART" id="SM00225">
    <property type="entry name" value="BTB"/>
    <property type="match status" value="1"/>
</dbReference>
<dbReference type="SUPFAM" id="SSF54695">
    <property type="entry name" value="POZ domain"/>
    <property type="match status" value="1"/>
</dbReference>
<dbReference type="SUPFAM" id="SSF81324">
    <property type="entry name" value="Voltage-gated potassium channels"/>
    <property type="match status" value="1"/>
</dbReference>
<feature type="chain" id="PRO_0000244029" description="A-type voltage-gated potassium channel KCND1">
    <location>
        <begin position="1"/>
        <end position="648"/>
    </location>
</feature>
<feature type="topological domain" description="Cytoplasmic" evidence="2">
    <location>
        <begin position="1"/>
        <end position="183"/>
    </location>
</feature>
<feature type="transmembrane region" description="Helical; Name=Segment S1" evidence="2">
    <location>
        <begin position="184"/>
        <end position="205"/>
    </location>
</feature>
<feature type="topological domain" description="Extracellular" evidence="2">
    <location>
        <begin position="206"/>
        <end position="230"/>
    </location>
</feature>
<feature type="transmembrane region" description="Helical; Name=Segment S2" evidence="2">
    <location>
        <begin position="231"/>
        <end position="252"/>
    </location>
</feature>
<feature type="topological domain" description="Cytoplasmic" evidence="2">
    <location>
        <begin position="253"/>
        <end position="263"/>
    </location>
</feature>
<feature type="transmembrane region" description="Helical; Name=Segment S3" evidence="2">
    <location>
        <begin position="264"/>
        <end position="284"/>
    </location>
</feature>
<feature type="topological domain" description="Extracellular" evidence="2">
    <location>
        <begin position="285"/>
        <end position="287"/>
    </location>
</feature>
<feature type="transmembrane region" description="Helical; Voltage-sensor; Name=Segment S4" evidence="2">
    <location>
        <begin position="288"/>
        <end position="308"/>
    </location>
</feature>
<feature type="topological domain" description="Cytoplasmic" evidence="2">
    <location>
        <begin position="309"/>
        <end position="323"/>
    </location>
</feature>
<feature type="transmembrane region" description="Helical; Name=Segment S5" evidence="2">
    <location>
        <begin position="324"/>
        <end position="345"/>
    </location>
</feature>
<feature type="topological domain" description="Extracellular" evidence="2">
    <location>
        <begin position="346"/>
        <end position="359"/>
    </location>
</feature>
<feature type="intramembrane region" description="Helical; Name=Pore helix" evidence="2">
    <location>
        <begin position="360"/>
        <end position="371"/>
    </location>
</feature>
<feature type="intramembrane region" evidence="2">
    <location>
        <begin position="372"/>
        <end position="379"/>
    </location>
</feature>
<feature type="topological domain" description="Extracellular" evidence="2">
    <location>
        <begin position="380"/>
        <end position="386"/>
    </location>
</feature>
<feature type="transmembrane region" description="Helical; Name=Segment S6" evidence="2">
    <location>
        <begin position="387"/>
        <end position="415"/>
    </location>
</feature>
<feature type="topological domain" description="Cytoplasmic" evidence="2">
    <location>
        <begin position="416"/>
        <end position="648"/>
    </location>
</feature>
<feature type="region of interest" description="Interaction with KCNIP1, KCNIP2, and other family members" evidence="5">
    <location>
        <begin position="2"/>
        <end position="20"/>
    </location>
</feature>
<feature type="region of interest" description="Interaction with KCNIP2" evidence="1">
    <location>
        <begin position="2"/>
        <end position="20"/>
    </location>
</feature>
<feature type="region of interest" description="Disordered" evidence="9">
    <location>
        <begin position="144"/>
        <end position="164"/>
    </location>
</feature>
<feature type="region of interest" description="S4-S5 linker" evidence="2">
    <location>
        <begin position="310"/>
        <end position="323"/>
    </location>
</feature>
<feature type="region of interest" description="Mediates dendritic targeting" evidence="1">
    <location>
        <begin position="474"/>
        <end position="489"/>
    </location>
</feature>
<feature type="region of interest" description="Required for dendritic targeting" evidence="5">
    <location>
        <begin position="474"/>
        <end position="489"/>
    </location>
</feature>
<feature type="region of interest" description="Disordered" evidence="9">
    <location>
        <begin position="601"/>
        <end position="636"/>
    </location>
</feature>
<feature type="short sequence motif" description="Selectivity filter" evidence="2">
    <location>
        <begin position="372"/>
        <end position="377"/>
    </location>
</feature>
<feature type="binding site" evidence="5">
    <location>
        <position position="104"/>
    </location>
    <ligand>
        <name>Zn(2+)</name>
        <dbReference type="ChEBI" id="CHEBI:29105"/>
    </ligand>
</feature>
<feature type="binding site" evidence="5">
    <location>
        <position position="131"/>
    </location>
    <ligand>
        <name>Zn(2+)</name>
        <dbReference type="ChEBI" id="CHEBI:29105"/>
    </ligand>
</feature>
<feature type="binding site" evidence="5">
    <location>
        <position position="132"/>
    </location>
    <ligand>
        <name>Zn(2+)</name>
        <dbReference type="ChEBI" id="CHEBI:29105"/>
    </ligand>
</feature>
<feature type="modified residue" description="Phosphoserine" evidence="3">
    <location>
        <position position="458"/>
    </location>
</feature>
<feature type="modified residue" description="Phosphoserine" evidence="4">
    <location>
        <position position="555"/>
    </location>
</feature>
<feature type="glycosylation site" description="N-linked (GlcNAc...) asparagine" evidence="8">
    <location>
        <position position="352"/>
    </location>
</feature>
<feature type="glycosylation site" description="N-linked (GlcNAc...) asparagine" evidence="8">
    <location>
        <position position="355"/>
    </location>
</feature>
<reference key="1">
    <citation type="submission" date="2005-03" db="EMBL/GenBank/DDBJ databases">
        <title>Ion channels in ocular epithelia.</title>
        <authorList>
            <person name="Rae J.L."/>
        </authorList>
    </citation>
    <scope>NUCLEOTIDE SEQUENCE [MRNA]</scope>
    <source>
        <tissue>Lens epithelium</tissue>
    </source>
</reference>
<comment type="function">
    <text evidence="3 6">A-type voltage-gated potassium channel that mediates transmembrane potassium transport in excitable membranes in the brain. Mediates A-type current I(SA) in suprachiasmatic nucleus (SCN) neurons. Exhibits a low-threshold A-type current with a hyperpolarized steady-state inactivation midpoint and the recovery process was steeply voltage-dependent, with recovery being markedly faster at more negative potentials. May regulates repetitive firing rates in the suprachiasmatic nucleus (SCN) neurons and circadian rhythms in neuronal excitability and behavior. Contributes to the regulation of the circadian rhythm of action potential firing in suprachiasmatic nucleus neurons, which regulates the circadian rhythm of locomotor activity. The regulatory subunit KCNIP1 modulates the kinetics of channel inactivation, increases the current amplitudes and accelerates recovery from inactivation, shifts activation in a depolarizing direction (By similarity). The regulatory subunit DPP10 decreases the voltage sensitivity of the inactivation channel gating (By similarity).</text>
</comment>
<comment type="catalytic activity">
    <reaction evidence="3">
        <text>K(+)(in) = K(+)(out)</text>
        <dbReference type="Rhea" id="RHEA:29463"/>
        <dbReference type="ChEBI" id="CHEBI:29103"/>
    </reaction>
</comment>
<comment type="subunit">
    <text evidence="3">Component of heteromultimeric potassium channels. Identified in potassium channel complexes containing KCND1, KCND2, KCND3, KCNIP1, KCNIP2, KCNIP3, KCNIP4, DPP6 and DPP10.</text>
</comment>
<comment type="subcellular location">
    <subcellularLocation>
        <location evidence="7">Cell membrane</location>
        <topology evidence="7">Multi-pass membrane protein</topology>
    </subcellularLocation>
</comment>
<comment type="domain">
    <text evidence="2">The transmembrane segment S4 functions as a voltage-sensor and is characterized by a series of positively charged amino acids at every third position. Channel opening and closing is effected by a conformation change that affects the position and orientation of the voltage-sensor paddle formed by S3 and S4 within the membrane. A transmembrane electric field that is positive inside would push the positively charged S4 segment outwards, thereby opening the pore, while a field that is negative inside would pull the S4 segment inwards and close the pore. Changes in the position and orientation of S4 are then transmitted to the activation gate formed by the inner helix bundle via the S4-S5 linker region.</text>
</comment>
<comment type="domain">
    <text evidence="5 7">The zinc binding sites in the N-terminal domain are important for tetramerization and assembly of a functional channel complex (By similarity). Most likely, the channel undergoes closed-state inactivation, where a subtle conformation change would render the protein less sensitive to activation (By similarity).</text>
</comment>
<comment type="similarity">
    <text evidence="10">Belongs to the potassium channel family. D (Shal) (TC 1.A.1.2) subfamily. Kv4.1/KCND1 sub-subfamily.</text>
</comment>
<sequence length="648" mass="71378">MAAGVATWLPFARAAAVGWLPLAQQPLPPAPGVKASRGDEVLVVNVSGRRFETWKNTLDRYPDTLLGSSEKEFFYNADSGEYFFDRDPDMFRHVLNFYRTGRLHCPRQECIQAFDEELAFYGLVPELVGDCCLEEYRDRKKENAERLAEDEEAEQAGDGPTLPAGSSLRQRLWRAFENPHTSTAALVFYYVTGFFIAVSVIANVVETIPCRSPTRRPPREQPCGDRFPLAFFCMDTACVLIFTGEYLLRLFAAPSRCRFLRSVMSLIDVVAILPYYIGLFMPKNEDVSGAFVTLRVFRVFRIFKFSRHSQGLRILGYTLKSCASELGFLLFSLTMAIIIFATVMFYAEKGTNKTNFTSIPAAFWYTIVTMTTLGYGDMVPSTIAGKIFGSICSLSGVLVIALPVPVIVSNFSRIYHQNQRADKRRAQQKVRLARIRLAKSGTTNAFLQYKQNGSLEDSGGGEEQALCVRNRSAFEQQHHHLLHCLEKTTCHEFTDELTFSEALGAVSLGSRTSRSTSVSSQPVGAGSLLSSCCPRRAKRRAIRLANSTASVSRGSMQELDTLAGLRRSPAPQSRSSLNAKPHDSLDLTCDSRDFVAAIISIPTPPANTPDESQPSSPGGGGGGASSTLRNSSLGTPCLLPETVKISSL</sequence>
<evidence type="ECO:0000250" key="1"/>
<evidence type="ECO:0000250" key="2">
    <source>
        <dbReference type="UniProtKB" id="P63142"/>
    </source>
</evidence>
<evidence type="ECO:0000250" key="3">
    <source>
        <dbReference type="UniProtKB" id="Q03719"/>
    </source>
</evidence>
<evidence type="ECO:0000250" key="4">
    <source>
        <dbReference type="UniProtKB" id="Q62897"/>
    </source>
</evidence>
<evidence type="ECO:0000250" key="5">
    <source>
        <dbReference type="UniProtKB" id="Q63881"/>
    </source>
</evidence>
<evidence type="ECO:0000250" key="6">
    <source>
        <dbReference type="UniProtKB" id="Q9NSA2"/>
    </source>
</evidence>
<evidence type="ECO:0000250" key="7">
    <source>
        <dbReference type="UniProtKB" id="Q9NZV8"/>
    </source>
</evidence>
<evidence type="ECO:0000255" key="8"/>
<evidence type="ECO:0000256" key="9">
    <source>
        <dbReference type="SAM" id="MobiDB-lite"/>
    </source>
</evidence>
<evidence type="ECO:0000305" key="10"/>
<organism>
    <name type="scientific">Bos taurus</name>
    <name type="common">Bovine</name>
    <dbReference type="NCBI Taxonomy" id="9913"/>
    <lineage>
        <taxon>Eukaryota</taxon>
        <taxon>Metazoa</taxon>
        <taxon>Chordata</taxon>
        <taxon>Craniata</taxon>
        <taxon>Vertebrata</taxon>
        <taxon>Euteleostomi</taxon>
        <taxon>Mammalia</taxon>
        <taxon>Eutheria</taxon>
        <taxon>Laurasiatheria</taxon>
        <taxon>Artiodactyla</taxon>
        <taxon>Ruminantia</taxon>
        <taxon>Pecora</taxon>
        <taxon>Bovidae</taxon>
        <taxon>Bovinae</taxon>
        <taxon>Bos</taxon>
    </lineage>
</organism>